<sequence>MKFYNREKELNYLKTYCQLDPNSILFVYGPKSSGKSTVMRRVIKELEDSNIVFFYYNLRKYATYSKEEFLRVFFEKSEKKYLLNKLELNLGVFKFGVEENFDFNNLKLNDVFAKINESINAVVEDGKKPVLIIDELQKLKNIYFNGGKSLLNELFNLFVSLTKMEHLCHVICLTSDTLFIEEIYQSSTLENTSKYYLIDWLRKGTIRNILKEEGFSEEEINYCLDYLSLPYEIVDLIENKKLGLSVEETIRQWINIEKDKIKYLIDTTDLDEEELYKVLSKFKDKIKISYEKEVKKEEMKYFKFLIKNEILFYDVINGIIKPTSVKKWYAIREILK</sequence>
<evidence type="ECO:0000255" key="1"/>
<evidence type="ECO:0000305" key="2"/>
<keyword id="KW-0067">ATP-binding</keyword>
<keyword id="KW-0547">Nucleotide-binding</keyword>
<keyword id="KW-1185">Reference proteome</keyword>
<dbReference type="EMBL" id="L77117">
    <property type="protein sequence ID" value="AAB98625.1"/>
    <property type="molecule type" value="Genomic_DNA"/>
</dbReference>
<dbReference type="PIR" id="A64378">
    <property type="entry name" value="A64378"/>
</dbReference>
<dbReference type="RefSeq" id="WP_010870130.1">
    <property type="nucleotide sequence ID" value="NC_000909.1"/>
</dbReference>
<dbReference type="SMR" id="Q58042"/>
<dbReference type="STRING" id="243232.MJ_0625"/>
<dbReference type="PaxDb" id="243232-MJ_0625"/>
<dbReference type="EnsemblBacteria" id="AAB98625">
    <property type="protein sequence ID" value="AAB98625"/>
    <property type="gene ID" value="MJ_0625"/>
</dbReference>
<dbReference type="GeneID" id="1451491"/>
<dbReference type="KEGG" id="mja:MJ_0625"/>
<dbReference type="eggNOG" id="arCOG03407">
    <property type="taxonomic scope" value="Archaea"/>
</dbReference>
<dbReference type="HOGENOM" id="CLU_068608_0_0_2"/>
<dbReference type="InParanoid" id="Q58042"/>
<dbReference type="OrthoDB" id="64057at2157"/>
<dbReference type="PhylomeDB" id="Q58042"/>
<dbReference type="Proteomes" id="UP000000805">
    <property type="component" value="Chromosome"/>
</dbReference>
<dbReference type="GO" id="GO:0005524">
    <property type="term" value="F:ATP binding"/>
    <property type="evidence" value="ECO:0007669"/>
    <property type="project" value="UniProtKB-KW"/>
</dbReference>
<dbReference type="GO" id="GO:0016887">
    <property type="term" value="F:ATP hydrolysis activity"/>
    <property type="evidence" value="ECO:0007669"/>
    <property type="project" value="InterPro"/>
</dbReference>
<dbReference type="CDD" id="cd00009">
    <property type="entry name" value="AAA"/>
    <property type="match status" value="1"/>
</dbReference>
<dbReference type="Gene3D" id="3.40.50.300">
    <property type="entry name" value="P-loop containing nucleotide triphosphate hydrolases"/>
    <property type="match status" value="1"/>
</dbReference>
<dbReference type="Gene3D" id="1.10.10.10">
    <property type="entry name" value="Winged helix-like DNA-binding domain superfamily/Winged helix DNA-binding domain"/>
    <property type="match status" value="1"/>
</dbReference>
<dbReference type="InterPro" id="IPR003593">
    <property type="entry name" value="AAA+_ATPase"/>
</dbReference>
<dbReference type="InterPro" id="IPR051667">
    <property type="entry name" value="Archaeal_ATPase_domain"/>
</dbReference>
<dbReference type="InterPro" id="IPR011579">
    <property type="entry name" value="ATPase_dom"/>
</dbReference>
<dbReference type="InterPro" id="IPR049081">
    <property type="entry name" value="MJ1010-like_2nd"/>
</dbReference>
<dbReference type="InterPro" id="IPR027417">
    <property type="entry name" value="P-loop_NTPase"/>
</dbReference>
<dbReference type="InterPro" id="IPR036388">
    <property type="entry name" value="WH-like_DNA-bd_sf"/>
</dbReference>
<dbReference type="PANTHER" id="PTHR37096:SF1">
    <property type="entry name" value="AAA+ ATPASE DOMAIN-CONTAINING PROTEIN"/>
    <property type="match status" value="1"/>
</dbReference>
<dbReference type="PANTHER" id="PTHR37096">
    <property type="entry name" value="YALI0E33429P"/>
    <property type="match status" value="1"/>
</dbReference>
<dbReference type="Pfam" id="PF01637">
    <property type="entry name" value="ATPase_2"/>
    <property type="match status" value="1"/>
</dbReference>
<dbReference type="Pfam" id="PF21690">
    <property type="entry name" value="MJ1010-like_2nd"/>
    <property type="match status" value="1"/>
</dbReference>
<dbReference type="SMART" id="SM00382">
    <property type="entry name" value="AAA"/>
    <property type="match status" value="1"/>
</dbReference>
<dbReference type="SUPFAM" id="SSF52540">
    <property type="entry name" value="P-loop containing nucleoside triphosphate hydrolases"/>
    <property type="match status" value="1"/>
</dbReference>
<accession>Q58042</accession>
<proteinExistence type="inferred from homology"/>
<reference key="1">
    <citation type="journal article" date="1996" name="Science">
        <title>Complete genome sequence of the methanogenic archaeon, Methanococcus jannaschii.</title>
        <authorList>
            <person name="Bult C.J."/>
            <person name="White O."/>
            <person name="Olsen G.J."/>
            <person name="Zhou L."/>
            <person name="Fleischmann R.D."/>
            <person name="Sutton G.G."/>
            <person name="Blake J.A."/>
            <person name="FitzGerald L.M."/>
            <person name="Clayton R.A."/>
            <person name="Gocayne J.D."/>
            <person name="Kerlavage A.R."/>
            <person name="Dougherty B.A."/>
            <person name="Tomb J.-F."/>
            <person name="Adams M.D."/>
            <person name="Reich C.I."/>
            <person name="Overbeek R."/>
            <person name="Kirkness E.F."/>
            <person name="Weinstock K.G."/>
            <person name="Merrick J.M."/>
            <person name="Glodek A."/>
            <person name="Scott J.L."/>
            <person name="Geoghagen N.S.M."/>
            <person name="Weidman J.F."/>
            <person name="Fuhrmann J.L."/>
            <person name="Nguyen D."/>
            <person name="Utterback T.R."/>
            <person name="Kelley J.M."/>
            <person name="Peterson J.D."/>
            <person name="Sadow P.W."/>
            <person name="Hanna M.C."/>
            <person name="Cotton M.D."/>
            <person name="Roberts K.M."/>
            <person name="Hurst M.A."/>
            <person name="Kaine B.P."/>
            <person name="Borodovsky M."/>
            <person name="Klenk H.-P."/>
            <person name="Fraser C.M."/>
            <person name="Smith H.O."/>
            <person name="Woese C.R."/>
            <person name="Venter J.C."/>
        </authorList>
    </citation>
    <scope>NUCLEOTIDE SEQUENCE [LARGE SCALE GENOMIC DNA]</scope>
    <source>
        <strain>ATCC 43067 / DSM 2661 / JAL-1 / JCM 10045 / NBRC 100440</strain>
    </source>
</reference>
<reference key="2">
    <citation type="journal article" date="1997" name="Science">
        <title>Evidence for a family of archaeal ATPases.</title>
        <authorList>
            <person name="Koonin E.V."/>
        </authorList>
    </citation>
    <scope>SIMILARITY</scope>
</reference>
<organism>
    <name type="scientific">Methanocaldococcus jannaschii (strain ATCC 43067 / DSM 2661 / JAL-1 / JCM 10045 / NBRC 100440)</name>
    <name type="common">Methanococcus jannaschii</name>
    <dbReference type="NCBI Taxonomy" id="243232"/>
    <lineage>
        <taxon>Archaea</taxon>
        <taxon>Methanobacteriati</taxon>
        <taxon>Methanobacteriota</taxon>
        <taxon>Methanomada group</taxon>
        <taxon>Methanococci</taxon>
        <taxon>Methanococcales</taxon>
        <taxon>Methanocaldococcaceae</taxon>
        <taxon>Methanocaldococcus</taxon>
    </lineage>
</organism>
<protein>
    <recommendedName>
        <fullName>Uncharacterized ATP-binding protein MJ0625</fullName>
    </recommendedName>
</protein>
<feature type="chain" id="PRO_0000184669" description="Uncharacterized ATP-binding protein MJ0625">
    <location>
        <begin position="1"/>
        <end position="336"/>
    </location>
</feature>
<feature type="binding site" evidence="1">
    <location>
        <begin position="29"/>
        <end position="36"/>
    </location>
    <ligand>
        <name>ATP</name>
        <dbReference type="ChEBI" id="CHEBI:30616"/>
    </ligand>
</feature>
<name>Y625_METJA</name>
<comment type="similarity">
    <text evidence="2">Belongs to the archaeal ATPase family.</text>
</comment>
<gene>
    <name type="ordered locus">MJ0625</name>
</gene>